<feature type="chain" id="PRO_0000364861" description="Ferredoxin--NADP reductase 2">
    <location>
        <begin position="1"/>
        <end position="328"/>
    </location>
</feature>
<feature type="binding site" evidence="1">
    <location>
        <position position="37"/>
    </location>
    <ligand>
        <name>FAD</name>
        <dbReference type="ChEBI" id="CHEBI:57692"/>
    </ligand>
</feature>
<feature type="binding site" evidence="1">
    <location>
        <position position="45"/>
    </location>
    <ligand>
        <name>FAD</name>
        <dbReference type="ChEBI" id="CHEBI:57692"/>
    </ligand>
</feature>
<feature type="binding site" evidence="1">
    <location>
        <position position="50"/>
    </location>
    <ligand>
        <name>FAD</name>
        <dbReference type="ChEBI" id="CHEBI:57692"/>
    </ligand>
</feature>
<feature type="binding site" evidence="1">
    <location>
        <position position="90"/>
    </location>
    <ligand>
        <name>FAD</name>
        <dbReference type="ChEBI" id="CHEBI:57692"/>
    </ligand>
</feature>
<feature type="binding site" evidence="1">
    <location>
        <position position="124"/>
    </location>
    <ligand>
        <name>FAD</name>
        <dbReference type="ChEBI" id="CHEBI:57692"/>
    </ligand>
</feature>
<feature type="binding site" evidence="1">
    <location>
        <position position="285"/>
    </location>
    <ligand>
        <name>FAD</name>
        <dbReference type="ChEBI" id="CHEBI:57692"/>
    </ligand>
</feature>
<feature type="binding site" evidence="1">
    <location>
        <position position="325"/>
    </location>
    <ligand>
        <name>FAD</name>
        <dbReference type="ChEBI" id="CHEBI:57692"/>
    </ligand>
</feature>
<gene>
    <name type="ordered locus">LCA_0435</name>
</gene>
<protein>
    <recommendedName>
        <fullName evidence="1">Ferredoxin--NADP reductase 2</fullName>
        <shortName evidence="1">FNR 2</shortName>
        <shortName evidence="1">Fd-NADP(+) reductase 2</shortName>
        <ecNumber evidence="1">1.18.1.2</ecNumber>
    </recommendedName>
</protein>
<dbReference type="EC" id="1.18.1.2" evidence="1"/>
<dbReference type="EMBL" id="CR936503">
    <property type="protein sequence ID" value="CAI54736.1"/>
    <property type="molecule type" value="Genomic_DNA"/>
</dbReference>
<dbReference type="RefSeq" id="WP_011374144.1">
    <property type="nucleotide sequence ID" value="NC_007576.1"/>
</dbReference>
<dbReference type="SMR" id="Q38YJ1"/>
<dbReference type="STRING" id="314315.LCA_0435"/>
<dbReference type="GeneID" id="57133262"/>
<dbReference type="KEGG" id="lsa:LCA_0435"/>
<dbReference type="eggNOG" id="COG0492">
    <property type="taxonomic scope" value="Bacteria"/>
</dbReference>
<dbReference type="HOGENOM" id="CLU_031864_5_5_9"/>
<dbReference type="OrthoDB" id="9806179at2"/>
<dbReference type="Proteomes" id="UP000002707">
    <property type="component" value="Chromosome"/>
</dbReference>
<dbReference type="GO" id="GO:0004324">
    <property type="term" value="F:ferredoxin-NADP+ reductase activity"/>
    <property type="evidence" value="ECO:0007669"/>
    <property type="project" value="UniProtKB-UniRule"/>
</dbReference>
<dbReference type="GO" id="GO:0050660">
    <property type="term" value="F:flavin adenine dinucleotide binding"/>
    <property type="evidence" value="ECO:0007669"/>
    <property type="project" value="UniProtKB-UniRule"/>
</dbReference>
<dbReference type="GO" id="GO:0050661">
    <property type="term" value="F:NADP binding"/>
    <property type="evidence" value="ECO:0007669"/>
    <property type="project" value="UniProtKB-UniRule"/>
</dbReference>
<dbReference type="Gene3D" id="3.50.50.60">
    <property type="entry name" value="FAD/NAD(P)-binding domain"/>
    <property type="match status" value="2"/>
</dbReference>
<dbReference type="HAMAP" id="MF_01685">
    <property type="entry name" value="FENR2"/>
    <property type="match status" value="1"/>
</dbReference>
<dbReference type="InterPro" id="IPR036188">
    <property type="entry name" value="FAD/NAD-bd_sf"/>
</dbReference>
<dbReference type="InterPro" id="IPR023753">
    <property type="entry name" value="FAD/NAD-binding_dom"/>
</dbReference>
<dbReference type="InterPro" id="IPR022890">
    <property type="entry name" value="Fd--NADP_Rdtase_type_2"/>
</dbReference>
<dbReference type="InterPro" id="IPR050097">
    <property type="entry name" value="Ferredoxin-NADP_redctase_2"/>
</dbReference>
<dbReference type="PANTHER" id="PTHR48105">
    <property type="entry name" value="THIOREDOXIN REDUCTASE 1-RELATED-RELATED"/>
    <property type="match status" value="1"/>
</dbReference>
<dbReference type="Pfam" id="PF07992">
    <property type="entry name" value="Pyr_redox_2"/>
    <property type="match status" value="1"/>
</dbReference>
<dbReference type="PRINTS" id="PR00368">
    <property type="entry name" value="FADPNR"/>
</dbReference>
<dbReference type="PRINTS" id="PR00469">
    <property type="entry name" value="PNDRDTASEII"/>
</dbReference>
<dbReference type="SUPFAM" id="SSF51905">
    <property type="entry name" value="FAD/NAD(P)-binding domain"/>
    <property type="match status" value="1"/>
</dbReference>
<comment type="catalytic activity">
    <reaction evidence="1">
        <text>2 reduced [2Fe-2S]-[ferredoxin] + NADP(+) + H(+) = 2 oxidized [2Fe-2S]-[ferredoxin] + NADPH</text>
        <dbReference type="Rhea" id="RHEA:20125"/>
        <dbReference type="Rhea" id="RHEA-COMP:10000"/>
        <dbReference type="Rhea" id="RHEA-COMP:10001"/>
        <dbReference type="ChEBI" id="CHEBI:15378"/>
        <dbReference type="ChEBI" id="CHEBI:33737"/>
        <dbReference type="ChEBI" id="CHEBI:33738"/>
        <dbReference type="ChEBI" id="CHEBI:57783"/>
        <dbReference type="ChEBI" id="CHEBI:58349"/>
        <dbReference type="EC" id="1.18.1.2"/>
    </reaction>
</comment>
<comment type="cofactor">
    <cofactor evidence="1">
        <name>FAD</name>
        <dbReference type="ChEBI" id="CHEBI:57692"/>
    </cofactor>
    <text evidence="1">Binds 1 FAD per subunit.</text>
</comment>
<comment type="subunit">
    <text evidence="1">Homodimer.</text>
</comment>
<comment type="similarity">
    <text evidence="1">Belongs to the ferredoxin--NADP reductase type 2 family.</text>
</comment>
<organism>
    <name type="scientific">Latilactobacillus sakei subsp. sakei (strain 23K)</name>
    <name type="common">Lactobacillus sakei subsp. sakei</name>
    <dbReference type="NCBI Taxonomy" id="314315"/>
    <lineage>
        <taxon>Bacteria</taxon>
        <taxon>Bacillati</taxon>
        <taxon>Bacillota</taxon>
        <taxon>Bacilli</taxon>
        <taxon>Lactobacillales</taxon>
        <taxon>Lactobacillaceae</taxon>
        <taxon>Latilactobacillus</taxon>
    </lineage>
</organism>
<name>FENR2_LATSS</name>
<keyword id="KW-0274">FAD</keyword>
<keyword id="KW-0285">Flavoprotein</keyword>
<keyword id="KW-0521">NADP</keyword>
<keyword id="KW-0560">Oxidoreductase</keyword>
<keyword id="KW-1185">Reference proteome</keyword>
<reference key="1">
    <citation type="journal article" date="2005" name="Nat. Biotechnol.">
        <title>The complete genome sequence of the meat-borne lactic acid bacterium Lactobacillus sakei 23K.</title>
        <authorList>
            <person name="Chaillou S."/>
            <person name="Champomier-Verges M.-C."/>
            <person name="Cornet M."/>
            <person name="Crutz-Le Coq A.-M."/>
            <person name="Dudez A.-M."/>
            <person name="Martin V."/>
            <person name="Beaufils S."/>
            <person name="Darbon-Rongere E."/>
            <person name="Bossy R."/>
            <person name="Loux V."/>
            <person name="Zagorec M."/>
        </authorList>
    </citation>
    <scope>NUCLEOTIDE SEQUENCE [LARGE SCALE GENOMIC DNA]</scope>
    <source>
        <strain>23K</strain>
    </source>
</reference>
<evidence type="ECO:0000255" key="1">
    <source>
        <dbReference type="HAMAP-Rule" id="MF_01685"/>
    </source>
</evidence>
<proteinExistence type="inferred from homology"/>
<accession>Q38YJ1</accession>
<sequence>MLDPNHLFDITVIGGGPVGMFAAYYAGMRKADVQIIESLPELGGQVATLYPEKEIFDVAGFKGITGAQLTANLAEQLAVFEPTTQLETSVKAILPQEDGTYILETSKGTTHTRGVIVAVGNGAFTPRKLAVDYQPEWENNYIHYFAKEMAQFKDQTVAVAGGGDSAIDWALMLEKVAKQVYIIHRRDQFRGLESSVDALMNSSIQIKTPFLIDGLTEVDHQLALSLNKMKSTDQEQLVVDKLLVNYGFISDTRILRDWGLTLDHHQVSVNQQMATNLPNVYAIGDIATYPGKVKLIASGFGEAPVAVTELLTKLYPEKRQPLHSTSIM</sequence>